<dbReference type="EMBL" id="L22552">
    <property type="protein sequence ID" value="AAA36999.1"/>
    <property type="molecule type" value="mRNA"/>
</dbReference>
<dbReference type="PIR" id="I48117">
    <property type="entry name" value="I48117"/>
</dbReference>
<dbReference type="SMR" id="P46791"/>
<dbReference type="PaxDb" id="10029-NP_001230972.1"/>
<dbReference type="eggNOG" id="KOG0877">
    <property type="taxonomic scope" value="Eukaryota"/>
</dbReference>
<dbReference type="Proteomes" id="UP000694386">
    <property type="component" value="Unplaced"/>
</dbReference>
<dbReference type="Proteomes" id="UP001108280">
    <property type="component" value="Unplaced"/>
</dbReference>
<dbReference type="GO" id="GO:0022627">
    <property type="term" value="C:cytosolic small ribosomal subunit"/>
    <property type="evidence" value="ECO:0007669"/>
    <property type="project" value="TreeGrafter"/>
</dbReference>
<dbReference type="GO" id="GO:0005730">
    <property type="term" value="C:nucleolus"/>
    <property type="evidence" value="ECO:0007669"/>
    <property type="project" value="UniProtKB-SubCell"/>
</dbReference>
<dbReference type="GO" id="GO:0003723">
    <property type="term" value="F:RNA binding"/>
    <property type="evidence" value="ECO:0007669"/>
    <property type="project" value="InterPro"/>
</dbReference>
<dbReference type="GO" id="GO:0003735">
    <property type="term" value="F:structural constituent of ribosome"/>
    <property type="evidence" value="ECO:0007669"/>
    <property type="project" value="InterPro"/>
</dbReference>
<dbReference type="GO" id="GO:0006412">
    <property type="term" value="P:translation"/>
    <property type="evidence" value="ECO:0007669"/>
    <property type="project" value="InterPro"/>
</dbReference>
<dbReference type="FunFam" id="3.30.160.20:FF:000133">
    <property type="entry name" value="40S ribosomal protein S2"/>
    <property type="match status" value="1"/>
</dbReference>
<dbReference type="FunFam" id="3.30.230.10:FF:000004">
    <property type="entry name" value="40S ribosomal protein S2"/>
    <property type="match status" value="1"/>
</dbReference>
<dbReference type="Gene3D" id="3.30.160.20">
    <property type="match status" value="1"/>
</dbReference>
<dbReference type="Gene3D" id="3.30.230.10">
    <property type="match status" value="1"/>
</dbReference>
<dbReference type="InterPro" id="IPR020568">
    <property type="entry name" value="Ribosomal_Su5_D2-typ_SF"/>
</dbReference>
<dbReference type="InterPro" id="IPR000851">
    <property type="entry name" value="Ribosomal_uS5"/>
</dbReference>
<dbReference type="InterPro" id="IPR005324">
    <property type="entry name" value="Ribosomal_uS5_C"/>
</dbReference>
<dbReference type="InterPro" id="IPR005711">
    <property type="entry name" value="Ribosomal_uS5_euk/arc"/>
</dbReference>
<dbReference type="InterPro" id="IPR013810">
    <property type="entry name" value="Ribosomal_uS5_N"/>
</dbReference>
<dbReference type="InterPro" id="IPR018192">
    <property type="entry name" value="Ribosomal_uS5_N_CS"/>
</dbReference>
<dbReference type="InterPro" id="IPR014721">
    <property type="entry name" value="Ribsml_uS5_D2-typ_fold_subgr"/>
</dbReference>
<dbReference type="NCBIfam" id="TIGR01020">
    <property type="entry name" value="uS5_euk_arch"/>
    <property type="match status" value="1"/>
</dbReference>
<dbReference type="PANTHER" id="PTHR13718">
    <property type="entry name" value="RIBOSOMAL S SUBUNIT"/>
    <property type="match status" value="1"/>
</dbReference>
<dbReference type="PANTHER" id="PTHR13718:SF93">
    <property type="entry name" value="SMALL RIBOSOMAL SUBUNIT PROTEIN US5"/>
    <property type="match status" value="1"/>
</dbReference>
<dbReference type="Pfam" id="PF00333">
    <property type="entry name" value="Ribosomal_S5"/>
    <property type="match status" value="1"/>
</dbReference>
<dbReference type="Pfam" id="PF03719">
    <property type="entry name" value="Ribosomal_S5_C"/>
    <property type="match status" value="1"/>
</dbReference>
<dbReference type="SUPFAM" id="SSF54768">
    <property type="entry name" value="dsRNA-binding domain-like"/>
    <property type="match status" value="1"/>
</dbReference>
<dbReference type="SUPFAM" id="SSF54211">
    <property type="entry name" value="Ribosomal protein S5 domain 2-like"/>
    <property type="match status" value="1"/>
</dbReference>
<dbReference type="PROSITE" id="PS00585">
    <property type="entry name" value="RIBOSOMAL_S5"/>
    <property type="match status" value="1"/>
</dbReference>
<dbReference type="PROSITE" id="PS50881">
    <property type="entry name" value="S5_DSRBD"/>
    <property type="match status" value="1"/>
</dbReference>
<organism>
    <name type="scientific">Cricetulus griseus</name>
    <name type="common">Chinese hamster</name>
    <name type="synonym">Cricetulus barabensis griseus</name>
    <dbReference type="NCBI Taxonomy" id="10029"/>
    <lineage>
        <taxon>Eukaryota</taxon>
        <taxon>Metazoa</taxon>
        <taxon>Chordata</taxon>
        <taxon>Craniata</taxon>
        <taxon>Vertebrata</taxon>
        <taxon>Euteleostomi</taxon>
        <taxon>Mammalia</taxon>
        <taxon>Eutheria</taxon>
        <taxon>Euarchontoglires</taxon>
        <taxon>Glires</taxon>
        <taxon>Rodentia</taxon>
        <taxon>Myomorpha</taxon>
        <taxon>Muroidea</taxon>
        <taxon>Cricetidae</taxon>
        <taxon>Cricetinae</taxon>
        <taxon>Cricetulus</taxon>
    </lineage>
</organism>
<feature type="chain" id="PRO_0000131672" description="Small ribosomal subunit protein uS5">
    <location>
        <begin position="1" status="less than"/>
        <end position="202" status="greater than"/>
    </location>
</feature>
<feature type="domain" description="S5 DRBM" evidence="3">
    <location>
        <begin position="42"/>
        <end position="105"/>
    </location>
</feature>
<feature type="modified residue" description="Phosphothreonine" evidence="1">
    <location>
        <position position="192"/>
    </location>
</feature>
<feature type="non-terminal residue">
    <location>
        <position position="1"/>
    </location>
</feature>
<feature type="non-terminal residue">
    <location>
        <position position="202"/>
    </location>
</feature>
<reference key="1">
    <citation type="submission" date="1993-11" db="EMBL/GenBank/DDBJ databases">
        <authorList>
            <person name="Harpold M.M."/>
            <person name="Evans R.M."/>
            <person name="Salditt-Georgieff M."/>
            <person name="Darnell J.E. Jr."/>
        </authorList>
    </citation>
    <scope>NUCLEOTIDE SEQUENCE [MRNA]</scope>
    <source>
        <tissue>Ovary</tissue>
    </source>
</reference>
<name>RS2_CRIGR</name>
<comment type="function">
    <text evidence="1 2">Component of the ribosome, a large ribonucleoprotein complex responsible for the synthesis of proteins in the cell. The small ribosomal subunit (SSU) binds messenger RNAs (mRNAs) and translates the encoded message by selecting cognate aminoacyl-transfer RNA (tRNA) molecules. The large subunit (LSU) contains the ribosomal catalytic site termed the peptidyl transferase center (PTC), which catalyzes the formation of peptide bonds, thereby polymerizing the amino acids delivered by tRNAs into a polypeptide chain. The nascent polypeptides leave the ribosome through a tunnel in the LSU and interact with protein factors that function in enzymatic processing, targeting, and the membrane insertion of nascent chains at the exit of the ribosomal tunnel (By similarity). Plays a role in the assembly and function of the 40S ribosomal subunit. Mutations in this protein affects the control of translational fidelity. Involved in nucleolar processing of pre-18S ribosomal RNA and ribosome assembly (By similarity).</text>
</comment>
<comment type="subunit">
    <text evidence="1">Component of the small ribosomal subunit. Interacts with zinc finger protein ZNF277 (via zinc-finger domains); the interaction is direct; the interaction is extra-ribosomal. Interaction with ZNF277 competes with the binding of RPS2 to protein arginine methyltransferase PRMT3.</text>
</comment>
<comment type="subcellular location">
    <subcellularLocation>
        <location evidence="1">Cytoplasm</location>
    </subcellularLocation>
    <subcellularLocation>
        <location evidence="1">Nucleus</location>
        <location evidence="1">Nucleolus</location>
    </subcellularLocation>
    <text evidence="1">Probably localized to nucleolus and cytoplasm in complex with ZNF277.</text>
</comment>
<comment type="PTM">
    <text evidence="1">Citrullinated by PADI4 in the Arg/Gly-rich region.</text>
</comment>
<comment type="PTM">
    <text evidence="1">Asymmetric arginine dimethylation by PRMT3 occurs at multiple sites in the Arg/Gly-rich region.</text>
</comment>
<comment type="PTM">
    <text evidence="1">Monoubiquitinated by RNF10 when a ribosome has stalled during translation, leading to its degradation by the proteasome. Deubiquitinated by USP10, preventing degradation by the proteasome and promoting 40S ribosome subunit recycling following ribosome dissociation.</text>
</comment>
<comment type="similarity">
    <text evidence="4">Belongs to the universal ribosomal protein uS5 family.</text>
</comment>
<evidence type="ECO:0000250" key="1">
    <source>
        <dbReference type="UniProtKB" id="P15880"/>
    </source>
</evidence>
<evidence type="ECO:0000250" key="2">
    <source>
        <dbReference type="UniProtKB" id="P25443"/>
    </source>
</evidence>
<evidence type="ECO:0000255" key="3">
    <source>
        <dbReference type="PROSITE-ProRule" id="PRU00268"/>
    </source>
</evidence>
<evidence type="ECO:0000305" key="4"/>
<gene>
    <name type="primary">RPS2</name>
</gene>
<accession>P46791</accession>
<keyword id="KW-0963">Cytoplasm</keyword>
<keyword id="KW-0539">Nucleus</keyword>
<keyword id="KW-0597">Phosphoprotein</keyword>
<keyword id="KW-0687">Ribonucleoprotein</keyword>
<keyword id="KW-0689">Ribosomal protein</keyword>
<keyword id="KW-0832">Ubl conjugation</keyword>
<proteinExistence type="evidence at transcript level"/>
<protein>
    <recommendedName>
        <fullName evidence="4">Small ribosomal subunit protein uS5</fullName>
    </recommendedName>
    <alternativeName>
        <fullName>40S ribosomal protein S2</fullName>
    </alternativeName>
</protein>
<sequence>IPVTKLGRLVKDMKIKSLEEIYLFSLPIKESEIIDFFLGASLKDEVLKIMPVQKQTRAGQRTRFKAFVAIGDYNGHVGLGVKCSKEVATAIRGAIILAKLSIVPVRRGYWGNKIGKPHTVPCKVTGRCGSVLVRLIPAPRGTGIVSAPVPKKLLMMAGIDDCYTSARGCTATLGNFAKATFDAISKTYSYLTPDLWKETVFT</sequence>